<feature type="chain" id="PRO_0000144953" description="Movement protein">
    <location>
        <begin position="1"/>
        <end position="268"/>
    </location>
</feature>
<feature type="region of interest" description="Disordered" evidence="4">
    <location>
        <begin position="215"/>
        <end position="243"/>
    </location>
</feature>
<feature type="compositionally biased region" description="Polar residues" evidence="4">
    <location>
        <begin position="225"/>
        <end position="237"/>
    </location>
</feature>
<keyword id="KW-1031">Host cell junction</keyword>
<keyword id="KW-1035">Host cytoplasm</keyword>
<keyword id="KW-1037">Host cytoskeleton</keyword>
<keyword id="KW-0945">Host-virus interaction</keyword>
<keyword id="KW-0694">RNA-binding</keyword>
<keyword id="KW-0813">Transport</keyword>
<keyword id="KW-0916">Viral movement protein</keyword>
<accession>O91275</accession>
<gene>
    <name type="primary">MP</name>
    <name type="synonym">MP30</name>
</gene>
<dbReference type="EMBL" id="AJ006991">
    <property type="protein sequence ID" value="CAA07412.1"/>
    <property type="molecule type" value="Genomic_RNA"/>
</dbReference>
<dbReference type="EMBL" id="AJ011933">
    <property type="protein sequence ID" value="CAA09876.1"/>
    <property type="molecule type" value="Genomic_RNA"/>
</dbReference>
<dbReference type="Proteomes" id="UP000000279">
    <property type="component" value="Genome"/>
</dbReference>
<dbReference type="GO" id="GO:0030430">
    <property type="term" value="C:host cell cytoplasm"/>
    <property type="evidence" value="ECO:0007669"/>
    <property type="project" value="UniProtKB-KW"/>
</dbReference>
<dbReference type="GO" id="GO:0044219">
    <property type="term" value="C:host cell plasmodesma"/>
    <property type="evidence" value="ECO:0007669"/>
    <property type="project" value="UniProtKB-SubCell"/>
</dbReference>
<dbReference type="GO" id="GO:0044163">
    <property type="term" value="C:host cytoskeleton"/>
    <property type="evidence" value="ECO:0000250"/>
    <property type="project" value="UniProtKB"/>
</dbReference>
<dbReference type="GO" id="GO:0003690">
    <property type="term" value="F:double-stranded DNA binding"/>
    <property type="evidence" value="ECO:0000250"/>
    <property type="project" value="UniProtKB"/>
</dbReference>
<dbReference type="GO" id="GO:0003723">
    <property type="term" value="F:RNA binding"/>
    <property type="evidence" value="ECO:0007669"/>
    <property type="project" value="UniProtKB-KW"/>
</dbReference>
<dbReference type="GO" id="GO:0046740">
    <property type="term" value="P:transport of virus in host, cell to cell"/>
    <property type="evidence" value="ECO:0007669"/>
    <property type="project" value="UniProtKB-KW"/>
</dbReference>
<dbReference type="InterPro" id="IPR001022">
    <property type="entry name" value="TMV_movement"/>
</dbReference>
<dbReference type="InterPro" id="IPR028919">
    <property type="entry name" value="Viral_movement"/>
</dbReference>
<dbReference type="Pfam" id="PF01107">
    <property type="entry name" value="MP"/>
    <property type="match status" value="1"/>
</dbReference>
<dbReference type="PRINTS" id="PR00964">
    <property type="entry name" value="MOVEMENT"/>
</dbReference>
<reference key="1">
    <citation type="submission" date="1998-07" db="EMBL/GenBank/DDBJ databases">
        <title>Sequence of movement protein gene of tobacco mosaic virus faba bean strain.</title>
        <authorList>
            <person name="Zhou X."/>
            <person name="Chen Q."/>
            <person name="Xue Z."/>
            <person name="Li D."/>
        </authorList>
    </citation>
    <scope>NUCLEOTIDE SEQUENCE [GENOMIC RNA]</scope>
</reference>
<reference key="2">
    <citation type="submission" date="1998-10" db="EMBL/GenBank/DDBJ databases">
        <title>Complete nucleotide sequence and genome organization of tobacco mosaic virus isolated from Vicia faba.</title>
        <authorList>
            <person name="Xue C."/>
            <person name="Zhou X."/>
            <person name="Chen Q."/>
            <person name="Qi Y."/>
            <person name="Li D."/>
        </authorList>
    </citation>
    <scope>NUCLEOTIDE SEQUENCE [GENOMIC RNA]</scope>
</reference>
<proteinExistence type="inferred from homology"/>
<name>MVP_TMVB</name>
<organismHost>
    <name type="scientific">Nicotiana tabacum</name>
    <name type="common">Common tobacco</name>
    <dbReference type="NCBI Taxonomy" id="4097"/>
</organismHost>
<organism>
    <name type="scientific">Tobacco mosaic virus (strain B935A)</name>
    <name type="common">TMV</name>
    <dbReference type="NCBI Taxonomy" id="138309"/>
    <lineage>
        <taxon>Viruses</taxon>
        <taxon>Riboviria</taxon>
        <taxon>Orthornavirae</taxon>
        <taxon>Kitrinoviricota</taxon>
        <taxon>Alsuviricetes</taxon>
        <taxon>Martellivirales</taxon>
        <taxon>Virgaviridae</taxon>
        <taxon>Tobamovirus</taxon>
        <taxon>Tobacco mosaic virus</taxon>
    </lineage>
</organism>
<protein>
    <recommendedName>
        <fullName>Movement protein</fullName>
    </recommendedName>
    <alternativeName>
        <fullName>30 kDa protein</fullName>
    </alternativeName>
    <alternativeName>
        <fullName>Cell-to-cell transport protein</fullName>
    </alternativeName>
</protein>
<comment type="function">
    <text evidence="2 3">Transports viral genome to neighboring plant cells directly through plasmosdesmata, without any budding. The movement protein allows efficient cell to cell propagation, by bypassing the host cell wall barrier. Forms a ribonucleoprotein complex with viral RNA. Binds microtubules and modulates microtubule stability. Can bind double-stranded DNA. Triggers host hypersensitive defense reaction in incompatible plants harboring resistance (R) proteins.</text>
</comment>
<comment type="subunit">
    <text evidence="1 2 3">Binds to host RBCS at the plasmodesmata; this interaction seems required for viral systemic movement (By similarity). In resistant plants, interacts with host MBP2C at host microtubules; this interaction prevents virus cell to cell movement. In resistant plants, interacts with host resistance (R) protein (e.g. tomato ToMV resistance protein TM-2(2), AC Q71BG9) at the host plasma membrane; this interaction triggers host defense responses leading to programmed cell death (By similarity).</text>
</comment>
<comment type="subcellular location">
    <subcellularLocation>
        <location evidence="3">Host cytoplasm</location>
        <location evidence="3">Host cytoskeleton</location>
    </subcellularLocation>
    <subcellularLocation>
        <location evidence="3">Host cell junction</location>
        <location evidence="3">Host plasmodesma</location>
    </subcellularLocation>
    <text evidence="2 3">Binds to the host cytoskeleton before being transported to the host plasmodesmata. Observed in virus replication complexes (VRCs) of tobamovirus infected host cells (By similarity). In resistant plants, targeted to the host plasma membrane via the interaction with host resistance (R) protein TM-2 (e.g. tomato ToMV resistance protein TM-2(2), AC Q71BG9) (By similarity).</text>
</comment>
<comment type="similarity">
    <text evidence="5">Belongs to the tobamovirus movement protein family.</text>
</comment>
<evidence type="ECO:0000250" key="1">
    <source>
        <dbReference type="UniProtKB" id="A0A0S4IJL0"/>
    </source>
</evidence>
<evidence type="ECO:0000250" key="2">
    <source>
        <dbReference type="UniProtKB" id="P03583"/>
    </source>
</evidence>
<evidence type="ECO:0000250" key="3">
    <source>
        <dbReference type="UniProtKB" id="P69513"/>
    </source>
</evidence>
<evidence type="ECO:0000256" key="4">
    <source>
        <dbReference type="SAM" id="MobiDB-lite"/>
    </source>
</evidence>
<evidence type="ECO:0000305" key="5"/>
<sequence length="268" mass="30012">MALVVKGKVNINEFIDLTKMEKILPSMFTPVKRVMCSKVDKIMVHENESLSEVNLLKGVKLIDSGYVCLAGLVVTGEWNLPDNCRGGVSVCLVDKRMERADEATLGSYYTAAAKKRFQFKVVPNYAITTQDAMKNVWQVLVNIRNVKMSAGFCPLSLEFVSVCIVYRNNIKLGLREKITNVRDGGPMELTEEVVDEFMEDVPMSIRLAKFRSRTGKKSDVRKGKNSSSDRSVPNKNYRNVKDFGGMSLKKNNLIDDDSEATVAESDSF</sequence>